<evidence type="ECO:0000250" key="1">
    <source>
        <dbReference type="UniProtKB" id="Q6P1K1"/>
    </source>
</evidence>
<evidence type="ECO:0000250" key="2">
    <source>
        <dbReference type="UniProtKB" id="Q9D8M3"/>
    </source>
</evidence>
<evidence type="ECO:0000255" key="3"/>
<evidence type="ECO:0000269" key="4">
    <source>
    </source>
</evidence>
<evidence type="ECO:0000269" key="5">
    <source>
    </source>
</evidence>
<evidence type="ECO:0000305" key="6"/>
<evidence type="ECO:0000305" key="7">
    <source>
    </source>
</evidence>
<feature type="chain" id="PRO_0000348579" description="Heme transporter hrg1-A">
    <location>
        <begin position="1"/>
        <end position="144"/>
    </location>
</feature>
<feature type="transmembrane region" description="Helical" evidence="3">
    <location>
        <begin position="10"/>
        <end position="30"/>
    </location>
</feature>
<feature type="transmembrane region" description="Helical" evidence="3">
    <location>
        <begin position="38"/>
        <end position="58"/>
    </location>
</feature>
<feature type="transmembrane region" description="Helical" evidence="3">
    <location>
        <begin position="71"/>
        <end position="91"/>
    </location>
</feature>
<feature type="transmembrane region" description="Helical" evidence="3">
    <location>
        <begin position="107"/>
        <end position="127"/>
    </location>
</feature>
<feature type="short sequence motif" description="Di-leucine motif">
    <location>
        <begin position="140"/>
        <end position="141"/>
    </location>
</feature>
<feature type="mutagenesis site" description="Unable to rescue the hematological defects in mutant embryos." evidence="5">
    <original>P</original>
    <variation>L</variation>
    <location>
        <position position="34"/>
    </location>
</feature>
<feature type="sequence conflict" description="In Ref. 1; AAI54227." evidence="6" ref="1">
    <original>I</original>
    <variation>T</variation>
    <location>
        <position position="8"/>
    </location>
</feature>
<sequence length="144" mass="16627">MAFNKTYIRVGYSCMGMLVGFSAFLVWNIAYKQPWTAAMGGLSGVLALWALVTHIMYIQDYWRTWLKGLKFFMAMGVIFSVLSIVAFISFLCVAISRQQSLTDPTSLYLSCVWSFMSLKWSFLLTLYSHRYRKEFADISILNDF</sequence>
<dbReference type="EMBL" id="BC053186">
    <property type="protein sequence ID" value="AAH53186.1"/>
    <property type="molecule type" value="mRNA"/>
</dbReference>
<dbReference type="EMBL" id="BC154226">
    <property type="protein sequence ID" value="AAI54227.1"/>
    <property type="molecule type" value="mRNA"/>
</dbReference>
<dbReference type="RefSeq" id="NP_956300.1">
    <property type="nucleotide sequence ID" value="NM_200006.1"/>
</dbReference>
<dbReference type="SMR" id="Q7T3B2"/>
<dbReference type="FunCoup" id="Q7T3B2">
    <property type="interactions" value="320"/>
</dbReference>
<dbReference type="STRING" id="7955.ENSDARP00000035010"/>
<dbReference type="PaxDb" id="7955-ENSDARP00000035010"/>
<dbReference type="Ensembl" id="ENSDART00000029930">
    <property type="protein sequence ID" value="ENSDARP00000035010"/>
    <property type="gene ID" value="ENSDARG00000026109"/>
</dbReference>
<dbReference type="GeneID" id="792763"/>
<dbReference type="KEGG" id="dre:792763"/>
<dbReference type="AGR" id="ZFIN:ZDB-GENE-030131-8226"/>
<dbReference type="CTD" id="792763"/>
<dbReference type="ZFIN" id="ZDB-GENE-030131-8226">
    <property type="gene designation" value="slc48a1b"/>
</dbReference>
<dbReference type="eggNOG" id="ENOG502S0AI">
    <property type="taxonomic scope" value="Eukaryota"/>
</dbReference>
<dbReference type="HOGENOM" id="CLU_148774_0_0_1"/>
<dbReference type="InParanoid" id="Q7T3B2"/>
<dbReference type="OMA" id="VWNIVYK"/>
<dbReference type="OrthoDB" id="5954402at2759"/>
<dbReference type="PhylomeDB" id="Q7T3B2"/>
<dbReference type="TreeFam" id="TF332621"/>
<dbReference type="PRO" id="PR:Q7T3B2"/>
<dbReference type="Proteomes" id="UP000000437">
    <property type="component" value="Alternate scaffold 6"/>
</dbReference>
<dbReference type="Proteomes" id="UP000000437">
    <property type="component" value="Chromosome 6"/>
</dbReference>
<dbReference type="Bgee" id="ENSDARG00000026109">
    <property type="expression patterns" value="Expressed in early embryo and 25 other cell types or tissues"/>
</dbReference>
<dbReference type="ExpressionAtlas" id="Q7T3B2">
    <property type="expression patterns" value="baseline and differential"/>
</dbReference>
<dbReference type="GO" id="GO:0010008">
    <property type="term" value="C:endosome membrane"/>
    <property type="evidence" value="ECO:0007669"/>
    <property type="project" value="UniProtKB-SubCell"/>
</dbReference>
<dbReference type="GO" id="GO:0005765">
    <property type="term" value="C:lysosomal membrane"/>
    <property type="evidence" value="ECO:0000318"/>
    <property type="project" value="GO_Central"/>
</dbReference>
<dbReference type="GO" id="GO:0005764">
    <property type="term" value="C:lysosome"/>
    <property type="evidence" value="ECO:0000314"/>
    <property type="project" value="ZFIN"/>
</dbReference>
<dbReference type="GO" id="GO:0030670">
    <property type="term" value="C:phagocytic vesicle membrane"/>
    <property type="evidence" value="ECO:0007669"/>
    <property type="project" value="UniProtKB-SubCell"/>
</dbReference>
<dbReference type="GO" id="GO:0005886">
    <property type="term" value="C:plasma membrane"/>
    <property type="evidence" value="ECO:0000318"/>
    <property type="project" value="GO_Central"/>
</dbReference>
<dbReference type="GO" id="GO:0020037">
    <property type="term" value="F:heme binding"/>
    <property type="evidence" value="ECO:0000318"/>
    <property type="project" value="GO_Central"/>
</dbReference>
<dbReference type="GO" id="GO:0015232">
    <property type="term" value="F:heme transmembrane transporter activity"/>
    <property type="evidence" value="ECO:0000314"/>
    <property type="project" value="ZFIN"/>
</dbReference>
<dbReference type="GO" id="GO:0048821">
    <property type="term" value="P:erythrocyte development"/>
    <property type="evidence" value="ECO:0000315"/>
    <property type="project" value="ZFIN"/>
</dbReference>
<dbReference type="GO" id="GO:0015886">
    <property type="term" value="P:heme transport"/>
    <property type="evidence" value="ECO:0000318"/>
    <property type="project" value="GO_Central"/>
</dbReference>
<dbReference type="InterPro" id="IPR026218">
    <property type="entry name" value="HRG"/>
</dbReference>
<dbReference type="PANTHER" id="PTHR31525">
    <property type="entry name" value="HEME TRANSPORTER HRG1"/>
    <property type="match status" value="1"/>
</dbReference>
<dbReference type="PANTHER" id="PTHR31525:SF1">
    <property type="entry name" value="HEME TRANSPORTER HRG1"/>
    <property type="match status" value="1"/>
</dbReference>
<dbReference type="Pfam" id="PF16954">
    <property type="entry name" value="HRG"/>
    <property type="match status" value="2"/>
</dbReference>
<dbReference type="PRINTS" id="PR02095">
    <property type="entry name" value="TRNSPORTRHRG"/>
</dbReference>
<protein>
    <recommendedName>
        <fullName>Heme transporter hrg1-A</fullName>
        <shortName>zHRG-1</shortName>
    </recommendedName>
    <alternativeName>
        <fullName>Heme-responsive gene 1 protein homolog A</fullName>
        <shortName>HRG-1A</shortName>
    </alternativeName>
    <alternativeName>
        <fullName>Solute carrier family 48 member 1-B</fullName>
    </alternativeName>
</protein>
<gene>
    <name type="primary">slc48a1b</name>
    <name type="synonym">hrg1a</name>
    <name type="ORF">zgc:63994</name>
</gene>
<comment type="function">
    <text evidence="4 5">Heme transporter that regulates intracellular heme availability through the endosomal or lysosomal compartment. In macrophages, is the heme transporter for heme-iron recycling (PubMed:18418376). Essential for macrophage iron homeostasis, transports heme from the phagolysosome to the cytoplasm during erythrophagocytosis (EP) (PubMed:23395172).</text>
</comment>
<comment type="catalytic activity">
    <reaction evidence="7">
        <text>heme b(in) = heme b(out)</text>
        <dbReference type="Rhea" id="RHEA:75443"/>
        <dbReference type="ChEBI" id="CHEBI:60344"/>
    </reaction>
</comment>
<comment type="subcellular location">
    <subcellularLocation>
        <location evidence="1">Endosome membrane</location>
        <topology evidence="1">Multi-pass membrane protein</topology>
    </subcellularLocation>
    <subcellularLocation>
        <location evidence="1">Lysosome membrane</location>
        <topology evidence="1">Multi-pass membrane protein</topology>
    </subcellularLocation>
    <subcellularLocation>
        <location evidence="2">Cytoplasmic vesicle</location>
        <location evidence="2">Phagosome membrane</location>
        <topology evidence="3">Multi-pass membrane protein</topology>
    </subcellularLocation>
    <text evidence="2">In macrophages, specifically localizes to the phagolysosomal membranes during erythrophagocytosis.</text>
</comment>
<comment type="tissue specificity">
    <text evidence="4">Expressed throughout the embryo, including the central nervous system.</text>
</comment>
<comment type="disruption phenotype">
    <text evidence="5">Mutant embryos show severe erythropoietic defect.</text>
</comment>
<comment type="similarity">
    <text evidence="6">Belongs to the HRG family.</text>
</comment>
<name>HRG1A_DANRE</name>
<reference key="1">
    <citation type="submission" date="2003-06" db="EMBL/GenBank/DDBJ databases">
        <authorList>
            <consortium name="NIH - Zebrafish Gene Collection (ZGC) project"/>
        </authorList>
    </citation>
    <scope>NUCLEOTIDE SEQUENCE [LARGE SCALE MRNA]</scope>
    <source>
        <tissue>Kidney</tissue>
        <tissue>Ovary</tissue>
    </source>
</reference>
<reference key="2">
    <citation type="journal article" date="2008" name="Nature">
        <title>Haem homeostasis is regulated by the conserved and concerted functions of HRG-1 proteins.</title>
        <authorList>
            <person name="Rajagopal A."/>
            <person name="Rao A.U."/>
            <person name="Amigo J."/>
            <person name="Tian M."/>
            <person name="Upadhyay S.K."/>
            <person name="Hall C."/>
            <person name="Uhm S."/>
            <person name="Mathew M.K."/>
            <person name="Fleming M.D."/>
            <person name="Paw B.H."/>
            <person name="Krause M."/>
            <person name="Hamza I."/>
        </authorList>
    </citation>
    <scope>FUNCTION</scope>
    <scope>TISSUE SPECIFICITY</scope>
    <scope>TRANSPORTER ACTIVITY</scope>
</reference>
<reference key="3">
    <citation type="journal article" date="2013" name="Cell Metab.">
        <title>HRG1 is essential for heme transport from the phagolysosome of macrophages during erythrophagocytosis.</title>
        <authorList>
            <person name="White C."/>
            <person name="Yuan X."/>
            <person name="Schmidt P.J."/>
            <person name="Bresciani E."/>
            <person name="Samuel T.K."/>
            <person name="Campagna D."/>
            <person name="Hall C."/>
            <person name="Bishop K."/>
            <person name="Calicchio M.L."/>
            <person name="Lapierre A."/>
            <person name="Ward D.M."/>
            <person name="Liu P."/>
            <person name="Fleming M.D."/>
            <person name="Hamza I."/>
        </authorList>
    </citation>
    <scope>FUNCTION</scope>
    <scope>DISRUPTION PHENOTYPE</scope>
    <scope>MUTAGENESIS OF PRO-34</scope>
</reference>
<organism>
    <name type="scientific">Danio rerio</name>
    <name type="common">Zebrafish</name>
    <name type="synonym">Brachydanio rerio</name>
    <dbReference type="NCBI Taxonomy" id="7955"/>
    <lineage>
        <taxon>Eukaryota</taxon>
        <taxon>Metazoa</taxon>
        <taxon>Chordata</taxon>
        <taxon>Craniata</taxon>
        <taxon>Vertebrata</taxon>
        <taxon>Euteleostomi</taxon>
        <taxon>Actinopterygii</taxon>
        <taxon>Neopterygii</taxon>
        <taxon>Teleostei</taxon>
        <taxon>Ostariophysi</taxon>
        <taxon>Cypriniformes</taxon>
        <taxon>Danionidae</taxon>
        <taxon>Danioninae</taxon>
        <taxon>Danio</taxon>
    </lineage>
</organism>
<keyword id="KW-0968">Cytoplasmic vesicle</keyword>
<keyword id="KW-0967">Endosome</keyword>
<keyword id="KW-0458">Lysosome</keyword>
<keyword id="KW-0472">Membrane</keyword>
<keyword id="KW-1185">Reference proteome</keyword>
<keyword id="KW-0812">Transmembrane</keyword>
<keyword id="KW-1133">Transmembrane helix</keyword>
<keyword id="KW-0813">Transport</keyword>
<proteinExistence type="evidence at protein level"/>
<accession>Q7T3B2</accession>
<accession>A8KBS4</accession>